<dbReference type="GO" id="GO:0005581">
    <property type="term" value="C:collagen trimer"/>
    <property type="evidence" value="ECO:0007669"/>
    <property type="project" value="UniProtKB-KW"/>
</dbReference>
<dbReference type="GO" id="GO:0005576">
    <property type="term" value="C:extracellular region"/>
    <property type="evidence" value="ECO:0007669"/>
    <property type="project" value="UniProtKB-SubCell"/>
</dbReference>
<dbReference type="InterPro" id="IPR008160">
    <property type="entry name" value="Collagen"/>
</dbReference>
<dbReference type="InterPro" id="IPR050938">
    <property type="entry name" value="Collagen_Structural_Proteins"/>
</dbReference>
<dbReference type="PANTHER" id="PTHR37456:SF6">
    <property type="entry name" value="COLLAGEN ALPHA-1(XXIII) CHAIN-LIKE ISOFORM X2"/>
    <property type="match status" value="1"/>
</dbReference>
<dbReference type="PANTHER" id="PTHR37456">
    <property type="entry name" value="SI:CH211-266K2.1"/>
    <property type="match status" value="1"/>
</dbReference>
<dbReference type="Pfam" id="PF01391">
    <property type="entry name" value="Collagen"/>
    <property type="match status" value="5"/>
</dbReference>
<protein>
    <recommendedName>
        <fullName evidence="5">Collagen alpha-2(I) chain</fullName>
    </recommendedName>
    <alternativeName>
        <fullName evidence="1">Alpha-2 type I collagen</fullName>
    </alternativeName>
</protein>
<comment type="function">
    <text evidence="7">Type I collagen is a member of group I collagen (fibrillar forming collagen).</text>
</comment>
<comment type="subunit">
    <text evidence="1">Trimers of one alpha 2(I) and two alpha 1(I) chains. Interacts (via C-terminus) with TMEM131 (via PapD-L domain); the interaction is direct and is involved in assembly and TRAPPIII ER-to-Golgi transport complex-dependent secretion of collagen.</text>
</comment>
<comment type="subcellular location">
    <subcellularLocation>
        <location evidence="1">Secreted</location>
    </subcellularLocation>
    <subcellularLocation>
        <location evidence="1">Secreted</location>
        <location evidence="1">Extracellular space</location>
    </subcellularLocation>
    <subcellularLocation>
        <location evidence="1">Secreted</location>
        <location evidence="1">Extracellular space</location>
        <location evidence="1">Extracellular matrix</location>
    </subcellularLocation>
</comment>
<comment type="tissue specificity">
    <text evidence="3 4">Expressed in bone.</text>
</comment>
<comment type="PTM">
    <text evidence="7">Prolines at the third position of the tripeptide repeating unit (G-X-Y) are hydroxylated in some or all of the chains.</text>
</comment>
<comment type="miscellaneous">
    <text evidence="3 4">These protein fragments were extracted from ancient bone material (PubMed:25799987, PubMed:31171860). The displayed protein fragments were extracted from an ancient caudal vertebra bone collected in Ultima Esperanza, Chile and around 13045 years old (PubMed:31171860). The tryptic peptides required multiple purification steps in order to eliminate contaminants and to increase the concentration of peptidic material (PubMed:25799987).</text>
</comment>
<comment type="similarity">
    <text evidence="7">Belongs to the fibrillar collagen family.</text>
</comment>
<reference key="1">
    <citation type="journal article" date="2019" name="Nat. Ecol. Evol.">
        <title>Palaeoproteomics resolves sloth relationships.</title>
        <authorList>
            <person name="Presslee S."/>
            <person name="Slater G.J."/>
            <person name="Pujos F."/>
            <person name="Forasiepi A.M."/>
            <person name="Fischer R."/>
            <person name="Molloy K."/>
            <person name="Mackie M."/>
            <person name="Olsen J.V."/>
            <person name="Kramarz A."/>
            <person name="Taglioretti M."/>
            <person name="Scaglia F."/>
            <person name="Lezcano M."/>
            <person name="Lanata J.L."/>
            <person name="Southon J."/>
            <person name="Feranec R."/>
            <person name="Bloch J."/>
            <person name="Hajduk A."/>
            <person name="Martin F.M."/>
            <person name="Salas Gismondi R."/>
            <person name="Reguero M."/>
            <person name="de Muizon C."/>
            <person name="Greenwood A."/>
            <person name="Chait B.T."/>
            <person name="Penkman K."/>
            <person name="Collins M."/>
            <person name="MacPhee R.D.E."/>
        </authorList>
    </citation>
    <scope>PROTEIN SEQUENCE</scope>
    <scope>TISSUE SPECIFICITY</scope>
    <scope>IDENTIFICATION BY MASS SPECTROMETRY</scope>
    <source>
        <tissue evidence="6">Bone</tissue>
    </source>
</reference>
<reference evidence="7" key="2">
    <citation type="journal article" date="2015" name="Nature">
        <title>Ancient proteins resolve the evolutionary history of Darwin's South American ungulates.</title>
        <authorList>
            <person name="Welker F."/>
            <person name="Collins M.J."/>
            <person name="Thomas J.A."/>
            <person name="Wadsley M."/>
            <person name="Brace S."/>
            <person name="Cappellini E."/>
            <person name="Turvey S.T."/>
            <person name="Reguero M."/>
            <person name="Gelfo J.N."/>
            <person name="Kramarz A."/>
            <person name="Burger J."/>
            <person name="Thomas-Oates J."/>
            <person name="Ashford D.A."/>
            <person name="Ashton P.D."/>
            <person name="Rowsell K."/>
            <person name="Porter D.M."/>
            <person name="Kessler B."/>
            <person name="Fischer R."/>
            <person name="Baessmann C."/>
            <person name="Kaspar S."/>
            <person name="Olsen J.V."/>
            <person name="Kiley P."/>
            <person name="Elliott J.A."/>
            <person name="Kelstrup C.D."/>
            <person name="Mullin V."/>
            <person name="Hofreiter M."/>
            <person name="Willerslev E."/>
            <person name="Hublin J.J."/>
            <person name="Orlando L."/>
            <person name="Barnes I."/>
            <person name="MacPhee R.D."/>
        </authorList>
    </citation>
    <scope>PROTEIN SEQUENCE OF 37-70; 79-99; 103-111; 121-137; 145-186; 205-264; 282-320; 335-354; 373-420; 433-490; 495-539; 594-626; 633-656; 696-732; 748-763; 784-796; 800-853 AND 938-978</scope>
    <scope>TISSUE SPECIFICITY</scope>
    <scope>IDENTIFICATION BY MASS SPECTROMETRY</scope>
    <source>
        <tissue evidence="5">Bone</tissue>
    </source>
</reference>
<keyword id="KW-0106">Calcium</keyword>
<keyword id="KW-0176">Collagen</keyword>
<keyword id="KW-0903">Direct protein sequencing</keyword>
<keyword id="KW-0952">Extinct organism protein</keyword>
<keyword id="KW-0272">Extracellular matrix</keyword>
<keyword id="KW-0379">Hydroxylation</keyword>
<keyword id="KW-0677">Repeat</keyword>
<keyword id="KW-0964">Secreted</keyword>
<sequence>SGGFDFSFLPQPPQEKAHDGGRYYLGPGPMGLMGPRGPPGASGAPGPQGFQGPAGEPGEPGQTGPAGARGPAGPPGKGVVGPQGARGFPGTPGLPGFKGIRGHNGLDGLKGQPGAPGVKGEPGAPGENGTPGQTGARGLPGERGRVGAPGPAGSRGSDGSVGPVGPAGPIGSAGPPGFPGAPGPKGELGPVGNTGPSGPAGPRGEQGLPGVSGPVGPPGNPGANGLTGAKGAAGLPGVAGAPGLPGPRGIPGPVGASGATGARGLVGEPGPAGSKGESGGKGEPGSAGPQGPPGSSGEEGKRGPSGESGSTGPTGPPGLRGGPGSRGLPGADGRAGVIGPAGARGASGPAGVRGPSGDTGRPGEPGLMGARGLPGSPGNVGPAGKEGPAGLPGIDGRPGPIGPAGARGEAGNIGFPGPKGPAGDPGKAGEKGHAGLAGNRGAPGPDGNNGAQGPPGLQGVQGGKGEQGPAGPPGFQGLPGPAGTTGEAGKPGERGIPGEFGLPGPAGPRGERGSGAVGPSGAIGSRGPSGPPGPDGNKGEPGVVGAPGTAGPAGSGGLPGERGAAGIPGGKGEKGETGLRGEVGTTGRDGARGAPGAVGAPGPAGATGDRGEAGAAGPAGPAGPRGSPGERGEVGPAGPNGFAGPAGAAGQPGAKGERGTKGPKGENGIVGPTGPVGSAGPAGPNGPAGPAGSRGDGGPPGVTGFPGAAGRTGPPGPSGITGPPGPPGAAGKEGLRGPRGDQGPVGRTGETGAGGPPGFTGEKGPSGEPGTAGPPGTAGPQGLLGAPGILGLPGSRGERGLPGVAGAVGEPGPLGIGPPGARGPSGGVGPGVNGAPGEAGRDGNPGSDGPPGRDGLPGHKGERGYAGNGPVGAAGAPGPHGAVGPAGKHGNRGEPGPVGSAGPVGALGPRGPSGPQGIRGDKGEAGDKGPRGLPGLKGHNGLQGLPGLAGQHGDQGSPGPVGPAGPRGPAGPSGPPGKDGRTGHPGAVGPAGIRGSQGSQGPSGPPGPPGPPGPPGASGGGYDFGYEGDFYRA</sequence>
<evidence type="ECO:0000250" key="1">
    <source>
        <dbReference type="UniProtKB" id="P08123"/>
    </source>
</evidence>
<evidence type="ECO:0000256" key="2">
    <source>
        <dbReference type="SAM" id="MobiDB-lite"/>
    </source>
</evidence>
<evidence type="ECO:0000269" key="3">
    <source>
    </source>
</evidence>
<evidence type="ECO:0000269" key="4">
    <source>
    </source>
</evidence>
<evidence type="ECO:0000303" key="5">
    <source>
    </source>
</evidence>
<evidence type="ECO:0000303" key="6">
    <source>
    </source>
</evidence>
<evidence type="ECO:0000305" key="7"/>
<organism evidence="5">
    <name type="scientific">Mylodon darwinii</name>
    <name type="common">Giant ground sloth</name>
    <dbReference type="NCBI Taxonomy" id="48784"/>
    <lineage>
        <taxon>Eukaryota</taxon>
        <taxon>Metazoa</taxon>
        <taxon>Chordata</taxon>
        <taxon>Craniata</taxon>
        <taxon>Vertebrata</taxon>
        <taxon>Euteleostomi</taxon>
        <taxon>Mammalia</taxon>
        <taxon>Eutheria</taxon>
        <taxon>Xenarthra</taxon>
        <taxon>Pilosa</taxon>
        <taxon>Folivora</taxon>
        <taxon>Mylodontidae</taxon>
        <taxon>Mylodon</taxon>
    </lineage>
</organism>
<accession>C0HJP4</accession>
<accession>C0HLH8</accession>
<name>CO1A2_MYLDA</name>
<proteinExistence type="evidence at protein level"/>
<feature type="chain" id="PRO_0000433504" description="Collagen alpha-2(I) chain" evidence="3">
    <location>
        <begin position="1"/>
        <end position="1033"/>
    </location>
</feature>
<feature type="region of interest" description="Disordered" evidence="2">
    <location>
        <begin position="1"/>
        <end position="1033"/>
    </location>
</feature>
<feature type="compositionally biased region" description="Low complexity" evidence="2">
    <location>
        <begin position="25"/>
        <end position="71"/>
    </location>
</feature>
<feature type="compositionally biased region" description="Low complexity" evidence="2">
    <location>
        <begin position="154"/>
        <end position="175"/>
    </location>
</feature>
<feature type="compositionally biased region" description="Low complexity" evidence="2">
    <location>
        <begin position="221"/>
        <end position="242"/>
    </location>
</feature>
<feature type="compositionally biased region" description="Gly residues" evidence="2">
    <location>
        <begin position="276"/>
        <end position="285"/>
    </location>
</feature>
<feature type="compositionally biased region" description="Low complexity" evidence="2">
    <location>
        <begin position="286"/>
        <end position="296"/>
    </location>
</feature>
<feature type="compositionally biased region" description="Gly residues" evidence="2">
    <location>
        <begin position="318"/>
        <end position="327"/>
    </location>
</feature>
<feature type="compositionally biased region" description="Low complexity" evidence="2">
    <location>
        <begin position="340"/>
        <end position="356"/>
    </location>
</feature>
<feature type="compositionally biased region" description="Low complexity" evidence="2">
    <location>
        <begin position="391"/>
        <end position="410"/>
    </location>
</feature>
<feature type="compositionally biased region" description="Gly residues" evidence="2">
    <location>
        <begin position="459"/>
        <end position="468"/>
    </location>
</feature>
<feature type="compositionally biased region" description="Low complexity" evidence="2">
    <location>
        <begin position="519"/>
        <end position="528"/>
    </location>
</feature>
<feature type="compositionally biased region" description="Low complexity" evidence="2">
    <location>
        <begin position="540"/>
        <end position="550"/>
    </location>
</feature>
<feature type="compositionally biased region" description="Gly residues" evidence="2">
    <location>
        <begin position="551"/>
        <end position="560"/>
    </location>
</feature>
<feature type="compositionally biased region" description="Low complexity" evidence="2">
    <location>
        <begin position="583"/>
        <end position="627"/>
    </location>
</feature>
<feature type="compositionally biased region" description="Low complexity" evidence="2">
    <location>
        <begin position="634"/>
        <end position="654"/>
    </location>
</feature>
<feature type="compositionally biased region" description="Basic and acidic residues" evidence="2">
    <location>
        <begin position="655"/>
        <end position="664"/>
    </location>
</feature>
<feature type="compositionally biased region" description="Low complexity" evidence="2">
    <location>
        <begin position="672"/>
        <end position="682"/>
    </location>
</feature>
<feature type="compositionally biased region" description="Gly residues" evidence="2">
    <location>
        <begin position="692"/>
        <end position="701"/>
    </location>
</feature>
<feature type="compositionally biased region" description="Low complexity" evidence="2">
    <location>
        <begin position="703"/>
        <end position="712"/>
    </location>
</feature>
<feature type="compositionally biased region" description="Gly residues" evidence="2">
    <location>
        <begin position="749"/>
        <end position="758"/>
    </location>
</feature>
<feature type="compositionally biased region" description="Low complexity" evidence="2">
    <location>
        <begin position="766"/>
        <end position="793"/>
    </location>
</feature>
<feature type="compositionally biased region" description="Low complexity" evidence="2">
    <location>
        <begin position="801"/>
        <end position="811"/>
    </location>
</feature>
<feature type="compositionally biased region" description="Gly residues" evidence="2">
    <location>
        <begin position="812"/>
        <end position="834"/>
    </location>
</feature>
<feature type="compositionally biased region" description="Low complexity" evidence="2">
    <location>
        <begin position="873"/>
        <end position="909"/>
    </location>
</feature>
<feature type="compositionally biased region" description="Basic and acidic residues" evidence="2">
    <location>
        <begin position="919"/>
        <end position="930"/>
    </location>
</feature>
<feature type="compositionally biased region" description="Pro residues" evidence="2">
    <location>
        <begin position="1003"/>
        <end position="1015"/>
    </location>
</feature>
<feature type="unsure residue" description="L or I" evidence="4">
    <location>
        <position position="9"/>
    </location>
</feature>
<feature type="unsure residue" description="L or I" evidence="4">
    <location>
        <position position="25"/>
    </location>
</feature>
<feature type="unsure residue" description="L or I" evidence="4">
    <location>
        <position position="32"/>
    </location>
</feature>
<feature type="unsure residue" description="L or I" evidence="3 4">
    <location>
        <position position="94"/>
    </location>
</feature>
<feature type="unsure residue" description="I or L" evidence="4">
    <location>
        <position position="100"/>
    </location>
</feature>
<feature type="unsure residue" description="L or I" evidence="3 4">
    <location>
        <position position="106"/>
    </location>
</feature>
<feature type="unsure residue" description="L or I" evidence="3 4">
    <location>
        <position position="109"/>
    </location>
</feature>
<feature type="unsure residue" description="L or I" evidence="4">
    <location>
        <position position="139"/>
    </location>
</feature>
<feature type="unsure residue" description="I or L" evidence="3 4">
    <location>
        <position position="170"/>
    </location>
</feature>
<feature type="unsure residue" description="L or I" evidence="4">
    <location>
        <position position="188"/>
    </location>
</feature>
<feature type="unsure residue" description="L or I" evidence="3 4">
    <location>
        <position position="208"/>
    </location>
</feature>
<feature type="unsure residue" description="L or I" evidence="3 4">
    <location>
        <position position="226"/>
    </location>
</feature>
<feature type="unsure residue" description="L or I" evidence="3 4">
    <location>
        <position position="235"/>
    </location>
</feature>
<feature type="unsure residue" description="L or I" evidence="3 4">
    <location>
        <position position="244"/>
    </location>
</feature>
<feature type="unsure residue" description="I or L" evidence="3 4">
    <location>
        <position position="250"/>
    </location>
</feature>
<feature type="unsure residue" description="L or I" evidence="4">
    <location>
        <position position="265"/>
    </location>
</feature>
<feature type="unsure residue" description="L or I" evidence="3 4">
    <location>
        <position position="319"/>
    </location>
</feature>
<feature type="unsure residue" description="L or I" evidence="4">
    <location>
        <position position="328"/>
    </location>
</feature>
<feature type="unsure residue" description="I or L" evidence="3 4">
    <location>
        <position position="338"/>
    </location>
</feature>
<feature type="unsure residue" description="L or I" evidence="4">
    <location>
        <position position="367"/>
    </location>
</feature>
<feature type="unsure residue" description="L or I" evidence="3 4">
    <location>
        <position position="373"/>
    </location>
</feature>
<feature type="unsure residue" description="L or I" evidence="3 4">
    <location>
        <position position="391"/>
    </location>
</feature>
<feature type="unsure residue" description="I or L" evidence="3 4">
    <location>
        <position position="394"/>
    </location>
</feature>
<feature type="unsure residue" description="I or L" evidence="3 4">
    <location>
        <position position="401"/>
    </location>
</feature>
<feature type="unsure residue" description="I or L" evidence="3 4">
    <location>
        <position position="413"/>
    </location>
</feature>
<feature type="unsure residue" description="L or I" evidence="3 4">
    <location>
        <position position="436"/>
    </location>
</feature>
<feature type="unsure residue" description="L or I" evidence="3 4">
    <location>
        <position position="457"/>
    </location>
</feature>
<feature type="unsure residue" description="L or I" evidence="3 4">
    <location>
        <position position="478"/>
    </location>
</feature>
<feature type="unsure residue" description="I or L" evidence="3 4">
    <location>
        <position position="496"/>
    </location>
</feature>
<feature type="unsure residue" description="L or I" evidence="3 4">
    <location>
        <position position="502"/>
    </location>
</feature>
<feature type="unsure residue" description="I or L" evidence="4">
    <location>
        <position position="523"/>
    </location>
</feature>
<feature type="unsure residue" description="L or I" evidence="4">
    <location>
        <position position="558"/>
    </location>
</feature>
<feature type="unsure residue" description="I or L" evidence="4">
    <location>
        <position position="567"/>
    </location>
</feature>
<feature type="unsure residue" description="L or I" evidence="4">
    <location>
        <position position="579"/>
    </location>
</feature>
<feature type="unsure residue" description="I or L" evidence="4">
    <location>
        <position position="669"/>
    </location>
</feature>
<feature type="unsure residue" description="I or L" evidence="3 4">
    <location>
        <position position="720"/>
    </location>
</feature>
<feature type="unsure residue" description="L or I" evidence="4">
    <location>
        <position position="735"/>
    </location>
</feature>
<feature type="unsure residue" description="L or I" evidence="4">
    <location>
        <position position="783"/>
    </location>
</feature>
<feature type="unsure residue" description="L or I" evidence="3 4">
    <location>
        <position position="784"/>
    </location>
</feature>
<feature type="unsure residue" description="I or L" evidence="3 4">
    <location>
        <position position="789"/>
    </location>
</feature>
<feature type="unsure residue" description="L or I" evidence="3 4">
    <location>
        <position position="790"/>
    </location>
</feature>
<feature type="unsure residue" description="L or I" evidence="3 4">
    <location>
        <position position="792"/>
    </location>
</feature>
<feature type="unsure residue" description="L or I" evidence="3 4">
    <location>
        <position position="801"/>
    </location>
</feature>
<feature type="unsure residue" description="L or I" evidence="3 4">
    <location>
        <position position="814"/>
    </location>
</feature>
<feature type="unsure residue" description="I or L" evidence="3 4">
    <location>
        <position position="816"/>
    </location>
</feature>
<feature type="unsure residue" description="L or I" evidence="4">
    <location>
        <position position="856"/>
    </location>
</feature>
<feature type="unsure residue" description="L or I" evidence="4">
    <location>
        <position position="907"/>
    </location>
</feature>
<feature type="unsure residue" description="I or L" evidence="4">
    <location>
        <position position="918"/>
    </location>
</feature>
<feature type="unsure residue" description="L or I" evidence="4">
    <location>
        <position position="933"/>
    </location>
</feature>
<feature type="unsure residue" description="L or I" evidence="4">
    <location>
        <position position="936"/>
    </location>
</feature>
<feature type="unsure residue" description="L or I" evidence="3 4">
    <location>
        <position position="942"/>
    </location>
</feature>
<feature type="unsure residue" description="L or I" evidence="3 4">
    <location>
        <position position="945"/>
    </location>
</feature>
<feature type="unsure residue" description="L or I" evidence="3 4">
    <location>
        <position position="948"/>
    </location>
</feature>
<feature type="unsure residue" description="I or L" evidence="4">
    <location>
        <position position="993"/>
    </location>
</feature>
<feature type="sequence conflict" description="In Ref. 2; AA sequence." evidence="7" ref="2">
    <original>AS</original>
    <variation>ST</variation>
    <location>
        <begin position="41"/>
        <end position="42"/>
    </location>
</feature>
<feature type="sequence conflict" description="In Ref. 2; AA sequence." evidence="7" ref="2">
    <original>A</original>
    <variation>V</variation>
    <location>
        <position position="44"/>
    </location>
</feature>
<feature type="sequence conflict" description="In Ref. 2; AA sequence." evidence="7" ref="2">
    <original>P</original>
    <variation>A</variation>
    <location>
        <position position="47"/>
    </location>
</feature>
<feature type="sequence conflict" description="In Ref. 2; AA sequence." evidence="7" ref="2">
    <original>V</original>
    <variation>I</variation>
    <location>
        <position position="146"/>
    </location>
</feature>
<feature type="sequence conflict" description="In Ref. 2; AA sequence." evidence="7" ref="2">
    <original>AGS</original>
    <variation>SGA</variation>
    <location>
        <begin position="152"/>
        <end position="154"/>
    </location>
</feature>
<feature type="sequence conflict" description="In Ref. 2; AA sequence." evidence="7" ref="2">
    <original>H</original>
    <variation>N</variation>
    <location>
        <position position="433"/>
    </location>
</feature>
<feature type="sequence conflict" description="In Ref. 2; AA sequence." evidence="7" ref="2">
    <original>ERG</original>
    <variation>APGE</variation>
    <location>
        <begin position="511"/>
        <end position="513"/>
    </location>
</feature>
<feature type="sequence conflict" description="In Ref. 2; AA sequence." evidence="7" ref="2">
    <original>PSGAI</original>
    <variation>TVGAP</variation>
    <location>
        <begin position="519"/>
        <end position="523"/>
    </location>
</feature>
<feature type="sequence conflict" description="In Ref. 2; AA sequence." evidence="7" ref="2">
    <original>A</original>
    <variation>S</variation>
    <location>
        <position position="613"/>
    </location>
</feature>
<feature type="sequence conflict" description="In Ref. 2; AA sequence." evidence="7" ref="2">
    <original>AA</original>
    <variation>PS</variation>
    <location>
        <begin position="615"/>
        <end position="616"/>
    </location>
</feature>
<feature type="sequence conflict" description="In Ref. 2; AA sequence." evidence="7" ref="2">
    <original>P</original>
    <variation>T</variation>
    <location>
        <position position="621"/>
    </location>
</feature>
<feature type="sequence conflict" description="In Ref. 2; AA sequence." evidence="7" ref="2">
    <original>T</original>
    <variation>A</variation>
    <location>
        <position position="748"/>
    </location>
</feature>
<feature type="sequence conflict" description="In Ref. 2; AA sequence." evidence="7" ref="2">
    <original>I</original>
    <variation>IH</variation>
    <location>
        <position position="816"/>
    </location>
</feature>
<feature type="sequence conflict" description="In Ref. 2; AA sequence." evidence="7" ref="2">
    <original>PP</original>
    <variation>TT</variation>
    <location>
        <begin position="818"/>
        <end position="819"/>
    </location>
</feature>
<feature type="sequence conflict" description="In Ref. 2; AA sequence." evidence="7" ref="2">
    <original>G</original>
    <variation>GA</variation>
    <location>
        <position position="829"/>
    </location>
</feature>
<feature type="sequence conflict" description="In Ref. 2; AA sequence." evidence="7" ref="2">
    <original>S</original>
    <variation>A</variation>
    <location>
        <position position="957"/>
    </location>
</feature>
<feature type="non-consecutive residues" evidence="6">
    <location>
        <begin position="24"/>
        <end position="25"/>
    </location>
</feature>
<feature type="non-consecutive residues" evidence="6">
    <location>
        <begin position="77"/>
        <end position="78"/>
    </location>
</feature>
<feature type="non-consecutive residues" evidence="6">
    <location>
        <begin position="513"/>
        <end position="514"/>
    </location>
</feature>
<feature type="non-consecutive residues" evidence="6">
    <location>
        <begin position="816"/>
        <end position="817"/>
    </location>
</feature>
<feature type="non-consecutive residues" evidence="6">
    <location>
        <begin position="829"/>
        <end position="830"/>
    </location>
</feature>
<feature type="non-consecutive residues" evidence="6">
    <location>
        <begin position="868"/>
        <end position="869"/>
    </location>
</feature>
<feature type="non-terminal residue" evidence="6">
    <location>
        <position position="1"/>
    </location>
</feature>
<feature type="non-terminal residue" evidence="6">
    <location>
        <position position="1033"/>
    </location>
</feature>
<gene>
    <name evidence="1" type="primary">COL1A2</name>
</gene>